<organism>
    <name type="scientific">Porphyromonas gingivalis (strain ATCC 33277 / DSM 20709 / CIP 103683 / JCM 12257 / NCTC 11834 / 2561)</name>
    <dbReference type="NCBI Taxonomy" id="431947"/>
    <lineage>
        <taxon>Bacteria</taxon>
        <taxon>Pseudomonadati</taxon>
        <taxon>Bacteroidota</taxon>
        <taxon>Bacteroidia</taxon>
        <taxon>Bacteroidales</taxon>
        <taxon>Porphyromonadaceae</taxon>
        <taxon>Porphyromonas</taxon>
    </lineage>
</organism>
<proteinExistence type="inferred from homology"/>
<evidence type="ECO:0000255" key="1">
    <source>
        <dbReference type="HAMAP-Rule" id="MF_00385"/>
    </source>
</evidence>
<evidence type="ECO:0000256" key="2">
    <source>
        <dbReference type="SAM" id="MobiDB-lite"/>
    </source>
</evidence>
<evidence type="ECO:0000305" key="3"/>
<dbReference type="EMBL" id="AP009380">
    <property type="protein sequence ID" value="BAG32686.1"/>
    <property type="molecule type" value="Genomic_DNA"/>
</dbReference>
<dbReference type="RefSeq" id="WP_012457297.1">
    <property type="nucleotide sequence ID" value="NC_010729.1"/>
</dbReference>
<dbReference type="SMR" id="B2RH41"/>
<dbReference type="GeneID" id="29255414"/>
<dbReference type="KEGG" id="pgn:PGN_0167"/>
<dbReference type="eggNOG" id="COG0228">
    <property type="taxonomic scope" value="Bacteria"/>
</dbReference>
<dbReference type="HOGENOM" id="CLU_100590_0_0_10"/>
<dbReference type="OrthoDB" id="9807878at2"/>
<dbReference type="BioCyc" id="PGIN431947:G1G2V-184-MONOMER"/>
<dbReference type="Proteomes" id="UP000008842">
    <property type="component" value="Chromosome"/>
</dbReference>
<dbReference type="GO" id="GO:0005737">
    <property type="term" value="C:cytoplasm"/>
    <property type="evidence" value="ECO:0007669"/>
    <property type="project" value="UniProtKB-ARBA"/>
</dbReference>
<dbReference type="GO" id="GO:0015935">
    <property type="term" value="C:small ribosomal subunit"/>
    <property type="evidence" value="ECO:0007669"/>
    <property type="project" value="TreeGrafter"/>
</dbReference>
<dbReference type="GO" id="GO:0003735">
    <property type="term" value="F:structural constituent of ribosome"/>
    <property type="evidence" value="ECO:0007669"/>
    <property type="project" value="InterPro"/>
</dbReference>
<dbReference type="GO" id="GO:0006412">
    <property type="term" value="P:translation"/>
    <property type="evidence" value="ECO:0007669"/>
    <property type="project" value="UniProtKB-UniRule"/>
</dbReference>
<dbReference type="Gene3D" id="3.30.1320.10">
    <property type="match status" value="1"/>
</dbReference>
<dbReference type="HAMAP" id="MF_00385">
    <property type="entry name" value="Ribosomal_bS16"/>
    <property type="match status" value="1"/>
</dbReference>
<dbReference type="InterPro" id="IPR000307">
    <property type="entry name" value="Ribosomal_bS16"/>
</dbReference>
<dbReference type="InterPro" id="IPR023803">
    <property type="entry name" value="Ribosomal_bS16_dom_sf"/>
</dbReference>
<dbReference type="NCBIfam" id="NF011094">
    <property type="entry name" value="PRK14521.1"/>
    <property type="match status" value="1"/>
</dbReference>
<dbReference type="NCBIfam" id="TIGR00002">
    <property type="entry name" value="S16"/>
    <property type="match status" value="1"/>
</dbReference>
<dbReference type="PANTHER" id="PTHR12919">
    <property type="entry name" value="30S RIBOSOMAL PROTEIN S16"/>
    <property type="match status" value="1"/>
</dbReference>
<dbReference type="PANTHER" id="PTHR12919:SF20">
    <property type="entry name" value="SMALL RIBOSOMAL SUBUNIT PROTEIN BS16M"/>
    <property type="match status" value="1"/>
</dbReference>
<dbReference type="Pfam" id="PF00886">
    <property type="entry name" value="Ribosomal_S16"/>
    <property type="match status" value="1"/>
</dbReference>
<dbReference type="SUPFAM" id="SSF54565">
    <property type="entry name" value="Ribosomal protein S16"/>
    <property type="match status" value="1"/>
</dbReference>
<accession>B2RH41</accession>
<feature type="chain" id="PRO_1000196454" description="Small ribosomal subunit protein bS16">
    <location>
        <begin position="1"/>
        <end position="192"/>
    </location>
</feature>
<feature type="region of interest" description="Disordered" evidence="2">
    <location>
        <begin position="149"/>
        <end position="192"/>
    </location>
</feature>
<feature type="compositionally biased region" description="Basic and acidic residues" evidence="2">
    <location>
        <begin position="149"/>
        <end position="161"/>
    </location>
</feature>
<feature type="compositionally biased region" description="Low complexity" evidence="2">
    <location>
        <begin position="178"/>
        <end position="192"/>
    </location>
</feature>
<sequence length="192" mass="20704">MATKIRLQRHGRKGYAFYKIVVADSRAPRDGKFIERIGSYNPNTNPATIDLNFERALYWIGVGAQPTDTARNILSREGVLMMKHLLGGVKKGAFDQAAAESKFEAWLKGKKDALNNMKAKVKEAAVADDKVKLEAEKAVNKARAEAVAEKKAAEAKAKAEAEAAAAAEEATETEETPMEAAAEEAPAAESAE</sequence>
<keyword id="KW-0687">Ribonucleoprotein</keyword>
<keyword id="KW-0689">Ribosomal protein</keyword>
<comment type="similarity">
    <text evidence="1">Belongs to the bacterial ribosomal protein bS16 family.</text>
</comment>
<name>RS16_PORG3</name>
<reference key="1">
    <citation type="journal article" date="2008" name="DNA Res.">
        <title>Determination of the genome sequence of Porphyromonas gingivalis strain ATCC 33277 and genomic comparison with strain W83 revealed extensive genome rearrangements in P. gingivalis.</title>
        <authorList>
            <person name="Naito M."/>
            <person name="Hirakawa H."/>
            <person name="Yamashita A."/>
            <person name="Ohara N."/>
            <person name="Shoji M."/>
            <person name="Yukitake H."/>
            <person name="Nakayama K."/>
            <person name="Toh H."/>
            <person name="Yoshimura F."/>
            <person name="Kuhara S."/>
            <person name="Hattori M."/>
            <person name="Hayashi T."/>
            <person name="Nakayama K."/>
        </authorList>
    </citation>
    <scope>NUCLEOTIDE SEQUENCE [LARGE SCALE GENOMIC DNA]</scope>
    <source>
        <strain>ATCC 33277 / DSM 20709 / CIP 103683 / JCM 12257 / NCTC 11834 / 2561</strain>
    </source>
</reference>
<gene>
    <name evidence="1" type="primary">rpsP</name>
    <name type="ordered locus">PGN_0167</name>
</gene>
<protein>
    <recommendedName>
        <fullName evidence="1">Small ribosomal subunit protein bS16</fullName>
    </recommendedName>
    <alternativeName>
        <fullName evidence="3">30S ribosomal protein S16</fullName>
    </alternativeName>
</protein>